<name>RS5_ALIB4</name>
<feature type="chain" id="PRO_0000323064" description="Small ribosomal subunit protein uS5">
    <location>
        <begin position="1"/>
        <end position="146"/>
    </location>
</feature>
<feature type="domain" description="S5 DRBM" evidence="1">
    <location>
        <begin position="8"/>
        <end position="71"/>
    </location>
</feature>
<gene>
    <name evidence="1" type="primary">rpsE</name>
    <name type="ordered locus">Abu_0769</name>
</gene>
<comment type="function">
    <text evidence="1">With S4 and S12 plays an important role in translational accuracy.</text>
</comment>
<comment type="function">
    <text evidence="1">Located at the back of the 30S subunit body where it stabilizes the conformation of the head with respect to the body.</text>
</comment>
<comment type="subunit">
    <text evidence="1">Part of the 30S ribosomal subunit. Contacts proteins S4 and S8.</text>
</comment>
<comment type="domain">
    <text>The N-terminal domain interacts with the head of the 30S subunit; the C-terminal domain interacts with the body and contacts protein S4. The interaction surface between S4 and S5 is involved in control of translational fidelity.</text>
</comment>
<comment type="similarity">
    <text evidence="1">Belongs to the universal ribosomal protein uS5 family.</text>
</comment>
<evidence type="ECO:0000255" key="1">
    <source>
        <dbReference type="HAMAP-Rule" id="MF_01307"/>
    </source>
</evidence>
<evidence type="ECO:0000305" key="2"/>
<dbReference type="EMBL" id="CP000361">
    <property type="protein sequence ID" value="ABV67034.1"/>
    <property type="molecule type" value="Genomic_DNA"/>
</dbReference>
<dbReference type="RefSeq" id="WP_012012514.1">
    <property type="nucleotide sequence ID" value="NC_009850.1"/>
</dbReference>
<dbReference type="SMR" id="A8ESW0"/>
<dbReference type="STRING" id="367737.Abu_0769"/>
<dbReference type="GeneID" id="24304146"/>
<dbReference type="KEGG" id="abu:Abu_0769"/>
<dbReference type="eggNOG" id="COG0098">
    <property type="taxonomic scope" value="Bacteria"/>
</dbReference>
<dbReference type="HOGENOM" id="CLU_065898_2_2_7"/>
<dbReference type="Proteomes" id="UP000001136">
    <property type="component" value="Chromosome"/>
</dbReference>
<dbReference type="GO" id="GO:0015935">
    <property type="term" value="C:small ribosomal subunit"/>
    <property type="evidence" value="ECO:0007669"/>
    <property type="project" value="InterPro"/>
</dbReference>
<dbReference type="GO" id="GO:0019843">
    <property type="term" value="F:rRNA binding"/>
    <property type="evidence" value="ECO:0007669"/>
    <property type="project" value="UniProtKB-UniRule"/>
</dbReference>
<dbReference type="GO" id="GO:0003735">
    <property type="term" value="F:structural constituent of ribosome"/>
    <property type="evidence" value="ECO:0007669"/>
    <property type="project" value="InterPro"/>
</dbReference>
<dbReference type="GO" id="GO:0006412">
    <property type="term" value="P:translation"/>
    <property type="evidence" value="ECO:0007669"/>
    <property type="project" value="UniProtKB-UniRule"/>
</dbReference>
<dbReference type="FunFam" id="3.30.160.20:FF:000001">
    <property type="entry name" value="30S ribosomal protein S5"/>
    <property type="match status" value="1"/>
</dbReference>
<dbReference type="FunFam" id="3.30.230.10:FF:000002">
    <property type="entry name" value="30S ribosomal protein S5"/>
    <property type="match status" value="1"/>
</dbReference>
<dbReference type="Gene3D" id="3.30.160.20">
    <property type="match status" value="1"/>
</dbReference>
<dbReference type="Gene3D" id="3.30.230.10">
    <property type="match status" value="1"/>
</dbReference>
<dbReference type="HAMAP" id="MF_01307_B">
    <property type="entry name" value="Ribosomal_uS5_B"/>
    <property type="match status" value="1"/>
</dbReference>
<dbReference type="InterPro" id="IPR020568">
    <property type="entry name" value="Ribosomal_Su5_D2-typ_SF"/>
</dbReference>
<dbReference type="InterPro" id="IPR000851">
    <property type="entry name" value="Ribosomal_uS5"/>
</dbReference>
<dbReference type="InterPro" id="IPR005712">
    <property type="entry name" value="Ribosomal_uS5_bac-type"/>
</dbReference>
<dbReference type="InterPro" id="IPR005324">
    <property type="entry name" value="Ribosomal_uS5_C"/>
</dbReference>
<dbReference type="InterPro" id="IPR013810">
    <property type="entry name" value="Ribosomal_uS5_N"/>
</dbReference>
<dbReference type="InterPro" id="IPR018192">
    <property type="entry name" value="Ribosomal_uS5_N_CS"/>
</dbReference>
<dbReference type="InterPro" id="IPR014721">
    <property type="entry name" value="Ribsml_uS5_D2-typ_fold_subgr"/>
</dbReference>
<dbReference type="NCBIfam" id="TIGR01021">
    <property type="entry name" value="rpsE_bact"/>
    <property type="match status" value="1"/>
</dbReference>
<dbReference type="PANTHER" id="PTHR48277">
    <property type="entry name" value="MITOCHONDRIAL RIBOSOMAL PROTEIN S5"/>
    <property type="match status" value="1"/>
</dbReference>
<dbReference type="PANTHER" id="PTHR48277:SF1">
    <property type="entry name" value="MITOCHONDRIAL RIBOSOMAL PROTEIN S5"/>
    <property type="match status" value="1"/>
</dbReference>
<dbReference type="Pfam" id="PF00333">
    <property type="entry name" value="Ribosomal_S5"/>
    <property type="match status" value="1"/>
</dbReference>
<dbReference type="Pfam" id="PF03719">
    <property type="entry name" value="Ribosomal_S5_C"/>
    <property type="match status" value="1"/>
</dbReference>
<dbReference type="SUPFAM" id="SSF54768">
    <property type="entry name" value="dsRNA-binding domain-like"/>
    <property type="match status" value="1"/>
</dbReference>
<dbReference type="SUPFAM" id="SSF54211">
    <property type="entry name" value="Ribosomal protein S5 domain 2-like"/>
    <property type="match status" value="1"/>
</dbReference>
<dbReference type="PROSITE" id="PS00585">
    <property type="entry name" value="RIBOSOMAL_S5"/>
    <property type="match status" value="1"/>
</dbReference>
<dbReference type="PROSITE" id="PS50881">
    <property type="entry name" value="S5_DSRBD"/>
    <property type="match status" value="1"/>
</dbReference>
<protein>
    <recommendedName>
        <fullName evidence="1">Small ribosomal subunit protein uS5</fullName>
    </recommendedName>
    <alternativeName>
        <fullName evidence="2">30S ribosomal protein S5</fullName>
    </alternativeName>
</protein>
<reference key="1">
    <citation type="journal article" date="2007" name="PLoS ONE">
        <title>The complete genome sequence and analysis of the Epsilonproteobacterium Arcobacter butzleri.</title>
        <authorList>
            <person name="Miller W.G."/>
            <person name="Parker C.T."/>
            <person name="Rubenfield M."/>
            <person name="Mendz G.L."/>
            <person name="Woesten M.M.S.M."/>
            <person name="Ussery D.W."/>
            <person name="Stolz J.F."/>
            <person name="Binnewies T.T."/>
            <person name="Hallin P.F."/>
            <person name="Wang G."/>
            <person name="Malek J.A."/>
            <person name="Rogosin A."/>
            <person name="Stanker L.H."/>
            <person name="Mandrell R.E."/>
        </authorList>
    </citation>
    <scope>NUCLEOTIDE SEQUENCE [LARGE SCALE GENOMIC DNA]</scope>
    <source>
        <strain>RM4018</strain>
    </source>
</reference>
<keyword id="KW-1185">Reference proteome</keyword>
<keyword id="KW-0687">Ribonucleoprotein</keyword>
<keyword id="KW-0689">Ribosomal protein</keyword>
<keyword id="KW-0694">RNA-binding</keyword>
<keyword id="KW-0699">rRNA-binding</keyword>
<sequence>MAVNREDFQEAIVKIGRVTKVVKGGRRFRFTALVVVGDKNGTVGFGTGKAKEVPDAIKKALDDAFKSLVTVSIKGTTIAHDIEHKYNASKILLRPASEGTGLIAGGAARPVLELSGVKDIIAKSLGSNNPNNLVQATVEALAKIKG</sequence>
<organism>
    <name type="scientific">Aliarcobacter butzleri (strain RM4018)</name>
    <name type="common">Arcobacter butzleri</name>
    <dbReference type="NCBI Taxonomy" id="367737"/>
    <lineage>
        <taxon>Bacteria</taxon>
        <taxon>Pseudomonadati</taxon>
        <taxon>Campylobacterota</taxon>
        <taxon>Epsilonproteobacteria</taxon>
        <taxon>Campylobacterales</taxon>
        <taxon>Arcobacteraceae</taxon>
        <taxon>Aliarcobacter</taxon>
    </lineage>
</organism>
<accession>A8ESW0</accession>
<proteinExistence type="inferred from homology"/>